<comment type="function">
    <text evidence="1">Regulatory subunit of pyrophosphate--fructose 6-phosphate 1-phosphotransferase.</text>
</comment>
<comment type="activity regulation">
    <text evidence="1">Allosterically activated by fructose 2,6-bisphosphate.</text>
</comment>
<comment type="pathway">
    <text evidence="1">Carbohydrate degradation; glycolysis; D-glyceraldehyde 3-phosphate and glycerone phosphate from D-glucose: step 3/4.</text>
</comment>
<comment type="subunit">
    <text evidence="1">Tetramer of two alpha (regulatory) and two beta (catalytic) chains.</text>
</comment>
<comment type="subcellular location">
    <subcellularLocation>
        <location evidence="1">Cytoplasm</location>
    </subcellularLocation>
</comment>
<comment type="similarity">
    <text evidence="1">Belongs to the phosphofructokinase type A (PFKA) family. PPi-dependent PFK group II subfamily. Clade 'Long' sub-subfamily.</text>
</comment>
<accession>P21342</accession>
<accession>M1AMC7</accession>
<feature type="chain" id="PRO_0000112048" description="Pyrophosphate--fructose 6-phosphate 1-phosphotransferase subunit alpha">
    <location>
        <begin position="1"/>
        <end position="616"/>
    </location>
</feature>
<feature type="sequence conflict" description="In Ref. 1; AAA63451." evidence="2" ref="1">
    <original>S</original>
    <variation>A</variation>
    <location>
        <position position="48"/>
    </location>
</feature>
<feature type="sequence conflict" description="In Ref. 1; AAA63451." evidence="2" ref="1">
    <original>E</original>
    <variation>D</variation>
    <location>
        <position position="275"/>
    </location>
</feature>
<feature type="sequence conflict" description="In Ref. 1; AAA63451." evidence="2" ref="1">
    <original>A</original>
    <variation>S</variation>
    <location>
        <position position="337"/>
    </location>
</feature>
<feature type="sequence conflict" description="In Ref. 1; AAA63451." evidence="2" ref="1">
    <original>V</original>
    <variation>G</variation>
    <location>
        <position position="553"/>
    </location>
</feature>
<feature type="sequence conflict" description="In Ref. 1; AAA63451." evidence="2" ref="1">
    <original>C</original>
    <variation>V</variation>
    <location>
        <position position="556"/>
    </location>
</feature>
<feature type="sequence conflict" description="In Ref. 1; AAA63451." evidence="2" ref="1">
    <original>Q</original>
    <variation>A</variation>
    <location>
        <position position="560"/>
    </location>
</feature>
<feature type="sequence conflict" description="In Ref. 1; AAA63451." evidence="2" ref="1">
    <original>R</original>
    <variation>A</variation>
    <location>
        <position position="565"/>
    </location>
</feature>
<keyword id="KW-0021">Allosteric enzyme</keyword>
<keyword id="KW-0963">Cytoplasm</keyword>
<keyword id="KW-0903">Direct protein sequencing</keyword>
<keyword id="KW-0324">Glycolysis</keyword>
<keyword id="KW-0418">Kinase</keyword>
<keyword id="KW-0460">Magnesium</keyword>
<keyword id="KW-0479">Metal-binding</keyword>
<keyword id="KW-1185">Reference proteome</keyword>
<keyword id="KW-0808">Transferase</keyword>
<organism>
    <name type="scientific">Solanum tuberosum</name>
    <name type="common">Potato</name>
    <dbReference type="NCBI Taxonomy" id="4113"/>
    <lineage>
        <taxon>Eukaryota</taxon>
        <taxon>Viridiplantae</taxon>
        <taxon>Streptophyta</taxon>
        <taxon>Embryophyta</taxon>
        <taxon>Tracheophyta</taxon>
        <taxon>Spermatophyta</taxon>
        <taxon>Magnoliopsida</taxon>
        <taxon>eudicotyledons</taxon>
        <taxon>Gunneridae</taxon>
        <taxon>Pentapetalae</taxon>
        <taxon>asterids</taxon>
        <taxon>lamiids</taxon>
        <taxon>Solanales</taxon>
        <taxon>Solanaceae</taxon>
        <taxon>Solanoideae</taxon>
        <taxon>Solaneae</taxon>
        <taxon>Solanum</taxon>
    </lineage>
</organism>
<name>PFPA_SOLTU</name>
<evidence type="ECO:0000255" key="1">
    <source>
        <dbReference type="HAMAP-Rule" id="MF_03185"/>
    </source>
</evidence>
<evidence type="ECO:0000305" key="2"/>
<protein>
    <recommendedName>
        <fullName evidence="1">Pyrophosphate--fructose 6-phosphate 1-phosphotransferase subunit alpha</fullName>
        <shortName evidence="1">PFP</shortName>
    </recommendedName>
    <alternativeName>
        <fullName evidence="1">6-phosphofructokinase, pyrophosphate dependent</fullName>
    </alternativeName>
    <alternativeName>
        <fullName evidence="1">PPi-PFK</fullName>
    </alternativeName>
    <alternativeName>
        <fullName evidence="1">Pyrophosphate-dependent 6-phosphofructose-1-kinase</fullName>
    </alternativeName>
</protein>
<dbReference type="EMBL" id="M55190">
    <property type="protein sequence ID" value="AAA63451.1"/>
    <property type="molecule type" value="mRNA"/>
</dbReference>
<dbReference type="PIR" id="A36094">
    <property type="entry name" value="A36094"/>
</dbReference>
<dbReference type="RefSeq" id="NP_001275358.1">
    <property type="nucleotide sequence ID" value="NM_001288429.1"/>
</dbReference>
<dbReference type="SMR" id="P21342"/>
<dbReference type="FunCoup" id="P21342">
    <property type="interactions" value="1203"/>
</dbReference>
<dbReference type="STRING" id="4113.P21342"/>
<dbReference type="PaxDb" id="4113-PGSC0003DMT400025919"/>
<dbReference type="EnsemblPlants" id="PGSC0003DMT400025919">
    <property type="protein sequence ID" value="PGSC0003DMT400025919"/>
    <property type="gene ID" value="PGSC0003DMG400010007"/>
</dbReference>
<dbReference type="GeneID" id="102577617"/>
<dbReference type="Gramene" id="PGSC0003DMT400025919">
    <property type="protein sequence ID" value="PGSC0003DMT400025919"/>
    <property type="gene ID" value="PGSC0003DMG400010007"/>
</dbReference>
<dbReference type="KEGG" id="sot:102577617"/>
<dbReference type="eggNOG" id="KOG2440">
    <property type="taxonomic scope" value="Eukaryota"/>
</dbReference>
<dbReference type="HOGENOM" id="CLU_022288_2_0_1"/>
<dbReference type="InParanoid" id="P21342"/>
<dbReference type="OMA" id="NKWHCGA"/>
<dbReference type="OrthoDB" id="537915at2759"/>
<dbReference type="SABIO-RK" id="P21342"/>
<dbReference type="UniPathway" id="UPA00109">
    <property type="reaction ID" value="UER00182"/>
</dbReference>
<dbReference type="Proteomes" id="UP000011115">
    <property type="component" value="Unassembled WGS sequence"/>
</dbReference>
<dbReference type="ExpressionAtlas" id="P21342">
    <property type="expression patterns" value="baseline"/>
</dbReference>
<dbReference type="GO" id="GO:0005737">
    <property type="term" value="C:cytoplasm"/>
    <property type="evidence" value="ECO:0007669"/>
    <property type="project" value="UniProtKB-SubCell"/>
</dbReference>
<dbReference type="GO" id="GO:0003872">
    <property type="term" value="F:6-phosphofructokinase activity"/>
    <property type="evidence" value="ECO:0007669"/>
    <property type="project" value="UniProtKB-UniRule"/>
</dbReference>
<dbReference type="GO" id="GO:0005524">
    <property type="term" value="F:ATP binding"/>
    <property type="evidence" value="ECO:0007669"/>
    <property type="project" value="InterPro"/>
</dbReference>
<dbReference type="GO" id="GO:0047334">
    <property type="term" value="F:diphosphate-fructose-6-phosphate 1-phosphotransferase activity"/>
    <property type="evidence" value="ECO:0000318"/>
    <property type="project" value="GO_Central"/>
</dbReference>
<dbReference type="GO" id="GO:0046872">
    <property type="term" value="F:metal ion binding"/>
    <property type="evidence" value="ECO:0007669"/>
    <property type="project" value="UniProtKB-KW"/>
</dbReference>
<dbReference type="GO" id="GO:0015979">
    <property type="term" value="P:photosynthesis"/>
    <property type="evidence" value="ECO:0000318"/>
    <property type="project" value="GO_Central"/>
</dbReference>
<dbReference type="GO" id="GO:0009749">
    <property type="term" value="P:response to glucose"/>
    <property type="evidence" value="ECO:0000318"/>
    <property type="project" value="GO_Central"/>
</dbReference>
<dbReference type="FunFam" id="1.10.10.480:FF:000001">
    <property type="entry name" value="Pyrophosphate--fructose 6-phosphate 1-phosphotransferase subunit alpha"/>
    <property type="match status" value="1"/>
</dbReference>
<dbReference type="FunFam" id="3.40.50.460:FF:000022">
    <property type="entry name" value="Pyrophosphate--fructose 6-phosphate 1-phosphotransferase subunit alpha 2"/>
    <property type="match status" value="1"/>
</dbReference>
<dbReference type="Gene3D" id="3.40.50.450">
    <property type="match status" value="1"/>
</dbReference>
<dbReference type="Gene3D" id="3.40.50.460">
    <property type="entry name" value="Phosphofructokinase domain"/>
    <property type="match status" value="1"/>
</dbReference>
<dbReference type="Gene3D" id="1.10.10.480">
    <property type="entry name" value="Phosphofructokinase, domain 3"/>
    <property type="match status" value="1"/>
</dbReference>
<dbReference type="HAMAP" id="MF_01980">
    <property type="entry name" value="Phosphofructokinase_II_Long"/>
    <property type="match status" value="1"/>
</dbReference>
<dbReference type="InterPro" id="IPR011183">
    <property type="entry name" value="PfpB_PPi_PFK"/>
</dbReference>
<dbReference type="InterPro" id="IPR000023">
    <property type="entry name" value="Phosphofructokinase_dom"/>
</dbReference>
<dbReference type="InterPro" id="IPR035966">
    <property type="entry name" value="PKF_sf"/>
</dbReference>
<dbReference type="NCBIfam" id="TIGR02477">
    <property type="entry name" value="PFKA_PPi"/>
    <property type="match status" value="1"/>
</dbReference>
<dbReference type="NCBIfam" id="NF005482">
    <property type="entry name" value="PRK07085.1"/>
    <property type="match status" value="1"/>
</dbReference>
<dbReference type="PANTHER" id="PTHR43650">
    <property type="entry name" value="PYROPHOSPHATE--FRUCTOSE 6-PHOSPHATE 1-PHOSPHOTRANSFERASE"/>
    <property type="match status" value="1"/>
</dbReference>
<dbReference type="PANTHER" id="PTHR43650:SF7">
    <property type="entry name" value="PYROPHOSPHATE--FRUCTOSE 6-PHOSPHATE 1-PHOSPHOTRANSFERASE SUBUNIT ALPHA"/>
    <property type="match status" value="1"/>
</dbReference>
<dbReference type="Pfam" id="PF00365">
    <property type="entry name" value="PFK"/>
    <property type="match status" value="1"/>
</dbReference>
<dbReference type="PIRSF" id="PIRSF005677">
    <property type="entry name" value="PPi_PFK_PfpB"/>
    <property type="match status" value="1"/>
</dbReference>
<dbReference type="SUPFAM" id="SSF53784">
    <property type="entry name" value="Phosphofructokinase"/>
    <property type="match status" value="1"/>
</dbReference>
<gene>
    <name evidence="1" type="primary">PFP-ALPHA</name>
    <name type="ORF">PGSC0003DMG400010007</name>
</gene>
<reference key="1">
    <citation type="journal article" date="1990" name="J. Biol. Chem.">
        <title>Pyrophosphate-dependent phosphofructokinase. Conservation of protein sequence between the alpha- and beta-subunits and with the ATP-dependent phosphofructokinase.</title>
        <authorList>
            <person name="Carlisle S.M."/>
            <person name="Blakeley S.D."/>
            <person name="Hemmingsen S.M."/>
            <person name="Trevanion S.J."/>
            <person name="Hiyoshi T."/>
            <person name="Kruger N.J."/>
            <person name="Dennis D.T."/>
        </authorList>
    </citation>
    <scope>NUCLEOTIDE SEQUENCE [MRNA]</scope>
    <scope>PROTEIN SEQUENCE OF 277-295</scope>
    <source>
        <strain>cv. Kennebec</strain>
    </source>
</reference>
<reference key="2">
    <citation type="journal article" date="2011" name="Nature">
        <title>Genome sequence and analysis of the tuber crop potato.</title>
        <authorList>
            <consortium name="The Potato Genome Sequencing Consortium"/>
        </authorList>
    </citation>
    <scope>NUCLEOTIDE SEQUENCE [LARGE SCALE GENOMIC DNA]</scope>
    <source>
        <strain>DM1-3 516 R44</strain>
    </source>
</reference>
<proteinExistence type="evidence at protein level"/>
<sequence length="616" mass="67359">MDADYGIPRELSDLQKLRSHYHPELPPCLQGTTVRVELRDATTAADPSGEHTIKRFFPHTYGQPLAHFLRATAKVPDAQIITEHPAIRVGVLFCGRQSPGGHNVIWGLHDALKVHNPKNILLGFLGGSEGLFAQKTLEITDDVLATYKNQGGYDMLGRTKDQIRTTEQVNAAMAACKALKLDGLVIIGGVTSNTDAAHLAEKFAETKCLTKVVGVPVTLNGDLKNQFVEANVGFDTICKVNSQLISNVCTDALSAEKYYYFIRLMGRKASHVALECTLQSHPNMVILGEEVAASKLTIFDITQQICDAVQARAEHDKNHGVILLPEGLIESIPEVYALLQEIHGLLRQGVSADKISSQLSPWASALFEFLPHFIRKQLLLHPESDDSAQLSQIETEKLIAHLVETEMNKRLKEGTYKGKKFNAICHFFGYQARGSLPSKFDCDYAYVLGHVCYHILAAGLNGYMATITNLKNPANKWHCGASPISAMMTVKRYGRGPGKASIGVPALHPATVDLRGKSYELLSQNATKFLLDDVYRNPGPLQFDGPGADAKAVSLCVEDQDYIGRIKKLQEYLDKVRTIVKPGCSQDVLKAALSAMASVTDILSVISSPSSVSTPF</sequence>